<protein>
    <recommendedName>
        <fullName>Type II secretion system protein K</fullName>
        <shortName>T2SS protein K</shortName>
    </recommendedName>
    <alternativeName>
        <fullName>General secretion pathway protein K</fullName>
    </alternativeName>
    <alternativeName>
        <fullName>Pullulanase secretion protein PulK</fullName>
    </alternativeName>
</protein>
<keyword id="KW-0997">Cell inner membrane</keyword>
<keyword id="KW-1003">Cell membrane</keyword>
<keyword id="KW-0472">Membrane</keyword>
<keyword id="KW-0653">Protein transport</keyword>
<keyword id="KW-0812">Transmembrane</keyword>
<keyword id="KW-1133">Transmembrane helix</keyword>
<keyword id="KW-0813">Transport</keyword>
<sequence length="326" mass="36153">MNHRQRGIALLMVLLILALMMVLASAMTERSARMYQQTATTLDNLQAKWYALGAETLAAALLQRDALDSPNQTHLAQNWAQQGRRFTVNDGEIYATITDAQACFNLNAINQRGDDESAAVPYPAQIFTRLLENLGSEPLRALQLTAALRDWVDDDRQPLLNGAEDEVYMAQSPGYLTGNQPLQDVSELRLLAGMDAALYQRLLPYVCALADETLQVNVNTLQPDRAALLAALFPAELTLVEARQLLQARAATGWSSVAAFLSQPALQKTDTAAARPWLAVHSERFIATFSVVMGNARYQQRSLLQKQGRTFGVVQRRYGIYWVADE</sequence>
<gene>
    <name type="primary">pulK</name>
</gene>
<proteinExistence type="inferred from homology"/>
<organism>
    <name type="scientific">Klebsiella pneumoniae</name>
    <dbReference type="NCBI Taxonomy" id="573"/>
    <lineage>
        <taxon>Bacteria</taxon>
        <taxon>Pseudomonadati</taxon>
        <taxon>Pseudomonadota</taxon>
        <taxon>Gammaproteobacteria</taxon>
        <taxon>Enterobacterales</taxon>
        <taxon>Enterobacteriaceae</taxon>
        <taxon>Klebsiella/Raoultella group</taxon>
        <taxon>Klebsiella</taxon>
        <taxon>Klebsiella pneumoniae complex</taxon>
    </lineage>
</organism>
<accession>P15750</accession>
<name>GSPK_KLEPN</name>
<comment type="function">
    <text evidence="1">Component of the type II secretion system required for the energy-dependent secretion of extracellular factors such as proteases and toxins from the periplasm. Plays a role in pseudopilus assembly and seems to control its length. Interacts with the pseudopilus tip complex that is critical for the recognition and binding of secretion substrates.</text>
</comment>
<comment type="subunit">
    <text evidence="1">Type II secretion is composed of four main components: the outer membrane complex, the inner membrane complex, the cytoplasmic secretion ATPase and the periplasm-spanning pseudopilus. Interacts with core component PulG.</text>
</comment>
<comment type="subcellular location">
    <subcellularLocation>
        <location evidence="1">Cell inner membrane</location>
    </subcellularLocation>
</comment>
<comment type="PTM">
    <text evidence="1">Cleaved by prepilin peptidase.</text>
</comment>
<comment type="similarity">
    <text evidence="3">Belongs to the GSP K family.</text>
</comment>
<dbReference type="EMBL" id="M32613">
    <property type="protein sequence ID" value="AAA25133.1"/>
    <property type="molecule type" value="Genomic_DNA"/>
</dbReference>
<dbReference type="EMBL" id="X52462">
    <property type="protein sequence ID" value="CAA36696.1"/>
    <property type="molecule type" value="Genomic_DNA"/>
</dbReference>
<dbReference type="PIR" id="S11799">
    <property type="entry name" value="S11799"/>
</dbReference>
<dbReference type="SMR" id="P15750"/>
<dbReference type="TCDB" id="3.A.15.1.1">
    <property type="family name" value="the outer membrane protein secreting main terminal branch (mtb) family"/>
</dbReference>
<dbReference type="GO" id="GO:0005886">
    <property type="term" value="C:plasma membrane"/>
    <property type="evidence" value="ECO:0007669"/>
    <property type="project" value="UniProtKB-SubCell"/>
</dbReference>
<dbReference type="GO" id="GO:0009306">
    <property type="term" value="P:protein secretion"/>
    <property type="evidence" value="ECO:0007669"/>
    <property type="project" value="InterPro"/>
</dbReference>
<dbReference type="Gene3D" id="1.10.40.60">
    <property type="entry name" value="EpsJ-like"/>
    <property type="match status" value="2"/>
</dbReference>
<dbReference type="Gene3D" id="3.30.1300.30">
    <property type="entry name" value="GSPII I/J protein-like"/>
    <property type="match status" value="1"/>
</dbReference>
<dbReference type="InterPro" id="IPR005628">
    <property type="entry name" value="GspK"/>
</dbReference>
<dbReference type="InterPro" id="IPR038072">
    <property type="entry name" value="GspK_central_sf"/>
</dbReference>
<dbReference type="InterPro" id="IPR045584">
    <property type="entry name" value="Pilin-like"/>
</dbReference>
<dbReference type="InterPro" id="IPR049031">
    <property type="entry name" value="T2SSK_SAM-like_1st"/>
</dbReference>
<dbReference type="InterPro" id="IPR049179">
    <property type="entry name" value="T2SSK_SAM-like_2nd"/>
</dbReference>
<dbReference type="NCBIfam" id="NF037980">
    <property type="entry name" value="T2SS_GspK"/>
    <property type="match status" value="1"/>
</dbReference>
<dbReference type="PANTHER" id="PTHR38831">
    <property type="entry name" value="TYPE II SECRETION SYSTEM PROTEIN K"/>
    <property type="match status" value="1"/>
</dbReference>
<dbReference type="PANTHER" id="PTHR38831:SF1">
    <property type="entry name" value="TYPE II SECRETION SYSTEM PROTEIN K-RELATED"/>
    <property type="match status" value="1"/>
</dbReference>
<dbReference type="Pfam" id="PF03934">
    <property type="entry name" value="T2SSK"/>
    <property type="match status" value="1"/>
</dbReference>
<dbReference type="Pfam" id="PF21687">
    <property type="entry name" value="T2SSK_1st"/>
    <property type="match status" value="1"/>
</dbReference>
<dbReference type="PIRSF" id="PIRSF002786">
    <property type="entry name" value="XcpX"/>
    <property type="match status" value="1"/>
</dbReference>
<dbReference type="SUPFAM" id="SSF158544">
    <property type="entry name" value="GspK insert domain-like"/>
    <property type="match status" value="2"/>
</dbReference>
<dbReference type="SUPFAM" id="SSF54523">
    <property type="entry name" value="Pili subunits"/>
    <property type="match status" value="1"/>
</dbReference>
<feature type="propeptide" id="PRO_0000449560" description="Leader sequence" evidence="1">
    <location>
        <begin position="1"/>
        <end position="7"/>
    </location>
</feature>
<feature type="chain" id="PRO_0000449561" description="Type II secretion system protein K">
    <location>
        <begin position="8"/>
        <end position="326"/>
    </location>
</feature>
<feature type="transmembrane region" description="Helical" evidence="2">
    <location>
        <begin position="8"/>
        <end position="28"/>
    </location>
</feature>
<feature type="topological domain" description="Periplasmic" evidence="2">
    <location>
        <begin position="29"/>
        <end position="326"/>
    </location>
</feature>
<reference key="1">
    <citation type="journal article" date="1990" name="Mol. Gen. Genet.">
        <title>Five additional genes in the pulC-O operon of the Gram-negative bacterium Klebsiella oxytoca UNF5023 which are required for pullulanase secretion.</title>
        <authorList>
            <person name="Reyss I."/>
            <person name="Pugsley A.P."/>
        </authorList>
    </citation>
    <scope>NUCLEOTIDE SEQUENCE [GENOMIC DNA]</scope>
    <source>
        <strain>UNF 5023</strain>
    </source>
</reference>
<reference key="2">
    <citation type="journal article" date="1990" name="Mol. Microbiol.">
        <title>Five genes at the 3' end of the Klebsiella pneumoniae pulC operon are required for pullulanase secretion.</title>
        <authorList>
            <person name="Pugsley A.P."/>
            <person name="Reyss I."/>
        </authorList>
    </citation>
    <scope>NUCLEOTIDE SEQUENCE [GENOMIC DNA] OF 126-326</scope>
    <source>
        <strain>UNF 5023</strain>
    </source>
</reference>
<evidence type="ECO:0000250" key="1">
    <source>
        <dbReference type="UniProtKB" id="Q00518"/>
    </source>
</evidence>
<evidence type="ECO:0000255" key="2"/>
<evidence type="ECO:0000305" key="3"/>